<accession>Q9ZKT2</accession>
<sequence>MPKRTDISNILLIGSGPIVIGQACEFDYSGTQSCKTLKSLGYRVILINSNPATVMTDPEFSHQTYIQPITPENIAAIIKKEKIDAILPTMGGQTALNAVMQMHQRGMLEGVELLGAKIEAIKKGEDRQAFKEAMLKIGMDLPKGRYAYSELEALEAISEIGFPAIIRASFTLAGGGSGVAYNIEEFQELAKNALDASPINEILIEESLLGWKEYEMEVIRDGKDNCIIVCCIENIDPMGVHTGDSITIAPSLTLTDKEYQRMRDASFAILREIGVDTGGSNVQFAIHPETLRMVVIEMNPRVSRSSALASKATGFPIAKVATMLAVGFSLDEIKNDITNTPASFEPSLDYIVVKIPRFAFEKFAGVSSTLGTSMKSIGEVMAIGGNFLEALQKALCSLENNWLGFESLSKDLEAIKKEIRRPNPKRLLYIADAFRLGVSVDEVFELCQIDRWFLSQIQKLVKAEEGINSSVLTDAKKLRGLKNLGFSDARIATKIKENENLEVSPFEVELARSNLQIAPHFEEVDTCAAEFLSLTPYLYSTYAPNPLPPIGNKQEKQEKKILIIGSGPNRIGQGIEFDYCCVHASFALKDLNIKSVMLNCNPETVSTDYDTSDTLYFEPIHFECVKSIIQRERVDGIIVHFGGQTPLKLAKDLAKMQAPIIGTPFKVIDIAEDREKFSLFLKELDIKQPENGMAKSVDEAYSIANAIGFPIIVRPSYVLGGQHMQILENIEELRHYLESVTHSLEISPKNPLLIDKFLEKAVELDVDAICDKKEVYIAGILQHIEEAGIHSGDSACFIPSTLSPEILDEIERVSAKIALHLGVVGLLNIQFAVYQNSLYLIEVNPRASRTVPFLSKALGVPLAKVATRVMVLEDLKEALKFYDKKNIVEYSKGVYKPKMPHFVALKEAVFPFNKLYGSDLILGPEMKSTGEVMGIARSLGLAFFKAQTACFNPIKNKGLIFVSIKDKDKEEACVLMKRLVELGFELCTTEGTHKALEKAGVKSLKVLKISEGRPNIMDLMMNGEISMAINTSDHKSQDDAKLIRASVLKNHVSYFTTLSAIEVLLLALEESSQEDELLALQDYLK</sequence>
<proteinExistence type="inferred from homology"/>
<dbReference type="EC" id="6.3.4.16" evidence="1"/>
<dbReference type="EC" id="6.3.5.5" evidence="1"/>
<dbReference type="EMBL" id="AE001439">
    <property type="protein sequence ID" value="AAD06431.1"/>
    <property type="molecule type" value="Genomic_DNA"/>
</dbReference>
<dbReference type="PIR" id="H71880">
    <property type="entry name" value="H71880"/>
</dbReference>
<dbReference type="RefSeq" id="WP_001126571.1">
    <property type="nucleotide sequence ID" value="NC_000921.1"/>
</dbReference>
<dbReference type="SMR" id="Q9ZKT2"/>
<dbReference type="KEGG" id="hpj:jhp_0853"/>
<dbReference type="PATRIC" id="fig|85963.30.peg.111"/>
<dbReference type="eggNOG" id="COG0458">
    <property type="taxonomic scope" value="Bacteria"/>
</dbReference>
<dbReference type="UniPathway" id="UPA00068">
    <property type="reaction ID" value="UER00171"/>
</dbReference>
<dbReference type="UniPathway" id="UPA00070">
    <property type="reaction ID" value="UER00115"/>
</dbReference>
<dbReference type="Proteomes" id="UP000000804">
    <property type="component" value="Chromosome"/>
</dbReference>
<dbReference type="GO" id="GO:0005737">
    <property type="term" value="C:cytoplasm"/>
    <property type="evidence" value="ECO:0007669"/>
    <property type="project" value="TreeGrafter"/>
</dbReference>
<dbReference type="GO" id="GO:0005524">
    <property type="term" value="F:ATP binding"/>
    <property type="evidence" value="ECO:0007669"/>
    <property type="project" value="UniProtKB-UniRule"/>
</dbReference>
<dbReference type="GO" id="GO:0004087">
    <property type="term" value="F:carbamoyl-phosphate synthase (ammonia) activity"/>
    <property type="evidence" value="ECO:0007669"/>
    <property type="project" value="RHEA"/>
</dbReference>
<dbReference type="GO" id="GO:0004088">
    <property type="term" value="F:carbamoyl-phosphate synthase (glutamine-hydrolyzing) activity"/>
    <property type="evidence" value="ECO:0007669"/>
    <property type="project" value="UniProtKB-UniRule"/>
</dbReference>
<dbReference type="GO" id="GO:0046872">
    <property type="term" value="F:metal ion binding"/>
    <property type="evidence" value="ECO:0007669"/>
    <property type="project" value="UniProtKB-KW"/>
</dbReference>
<dbReference type="GO" id="GO:0044205">
    <property type="term" value="P:'de novo' UMP biosynthetic process"/>
    <property type="evidence" value="ECO:0007669"/>
    <property type="project" value="UniProtKB-UniRule"/>
</dbReference>
<dbReference type="GO" id="GO:0006541">
    <property type="term" value="P:glutamine metabolic process"/>
    <property type="evidence" value="ECO:0007669"/>
    <property type="project" value="TreeGrafter"/>
</dbReference>
<dbReference type="GO" id="GO:0006526">
    <property type="term" value="P:L-arginine biosynthetic process"/>
    <property type="evidence" value="ECO:0007669"/>
    <property type="project" value="UniProtKB-UniRule"/>
</dbReference>
<dbReference type="CDD" id="cd01424">
    <property type="entry name" value="MGS_CPS_II"/>
    <property type="match status" value="1"/>
</dbReference>
<dbReference type="FunFam" id="1.10.1030.10:FF:000010">
    <property type="entry name" value="Carbamoyl-phosphate synthase large chain"/>
    <property type="match status" value="1"/>
</dbReference>
<dbReference type="FunFam" id="3.30.1490.20:FF:000001">
    <property type="entry name" value="Carbamoyl-phosphate synthase large chain"/>
    <property type="match status" value="1"/>
</dbReference>
<dbReference type="FunFam" id="3.30.470.20:FF:000007">
    <property type="entry name" value="Carbamoyl-phosphate synthase large chain"/>
    <property type="match status" value="1"/>
</dbReference>
<dbReference type="FunFam" id="3.30.470.20:FF:000026">
    <property type="entry name" value="Carbamoyl-phosphate synthase large chain"/>
    <property type="match status" value="1"/>
</dbReference>
<dbReference type="FunFam" id="3.40.50.20:FF:000001">
    <property type="entry name" value="Carbamoyl-phosphate synthase large chain"/>
    <property type="match status" value="2"/>
</dbReference>
<dbReference type="Gene3D" id="3.40.50.20">
    <property type="match status" value="2"/>
</dbReference>
<dbReference type="Gene3D" id="3.30.1490.20">
    <property type="entry name" value="ATP-grasp fold, A domain"/>
    <property type="match status" value="1"/>
</dbReference>
<dbReference type="Gene3D" id="3.30.470.20">
    <property type="entry name" value="ATP-grasp fold, B domain"/>
    <property type="match status" value="2"/>
</dbReference>
<dbReference type="Gene3D" id="1.10.1030.10">
    <property type="entry name" value="Carbamoyl-phosphate synthetase, large subunit oligomerisation domain"/>
    <property type="match status" value="1"/>
</dbReference>
<dbReference type="Gene3D" id="3.40.50.1380">
    <property type="entry name" value="Methylglyoxal synthase-like domain"/>
    <property type="match status" value="1"/>
</dbReference>
<dbReference type="HAMAP" id="MF_01210_B">
    <property type="entry name" value="CPSase_L_chain_B"/>
    <property type="match status" value="1"/>
</dbReference>
<dbReference type="InterPro" id="IPR011761">
    <property type="entry name" value="ATP-grasp"/>
</dbReference>
<dbReference type="InterPro" id="IPR013815">
    <property type="entry name" value="ATP_grasp_subdomain_1"/>
</dbReference>
<dbReference type="InterPro" id="IPR006275">
    <property type="entry name" value="CarbamoylP_synth_lsu"/>
</dbReference>
<dbReference type="InterPro" id="IPR005480">
    <property type="entry name" value="CarbamoylP_synth_lsu_oligo"/>
</dbReference>
<dbReference type="InterPro" id="IPR036897">
    <property type="entry name" value="CarbamoylP_synth_lsu_oligo_sf"/>
</dbReference>
<dbReference type="InterPro" id="IPR005479">
    <property type="entry name" value="CbamoylP_synth_lsu-like_ATP-bd"/>
</dbReference>
<dbReference type="InterPro" id="IPR005483">
    <property type="entry name" value="CbamoylP_synth_lsu_CPSase_dom"/>
</dbReference>
<dbReference type="InterPro" id="IPR011607">
    <property type="entry name" value="MGS-like_dom"/>
</dbReference>
<dbReference type="InterPro" id="IPR036914">
    <property type="entry name" value="MGS-like_dom_sf"/>
</dbReference>
<dbReference type="InterPro" id="IPR033937">
    <property type="entry name" value="MGS_CPS_CarB"/>
</dbReference>
<dbReference type="InterPro" id="IPR016185">
    <property type="entry name" value="PreATP-grasp_dom_sf"/>
</dbReference>
<dbReference type="NCBIfam" id="TIGR01369">
    <property type="entry name" value="CPSaseII_lrg"/>
    <property type="match status" value="1"/>
</dbReference>
<dbReference type="NCBIfam" id="NF003671">
    <property type="entry name" value="PRK05294.1"/>
    <property type="match status" value="1"/>
</dbReference>
<dbReference type="NCBIfam" id="NF009455">
    <property type="entry name" value="PRK12815.1"/>
    <property type="match status" value="1"/>
</dbReference>
<dbReference type="PANTHER" id="PTHR11405:SF53">
    <property type="entry name" value="CARBAMOYL-PHOSPHATE SYNTHASE [AMMONIA], MITOCHONDRIAL"/>
    <property type="match status" value="1"/>
</dbReference>
<dbReference type="PANTHER" id="PTHR11405">
    <property type="entry name" value="CARBAMOYLTRANSFERASE FAMILY MEMBER"/>
    <property type="match status" value="1"/>
</dbReference>
<dbReference type="Pfam" id="PF02786">
    <property type="entry name" value="CPSase_L_D2"/>
    <property type="match status" value="2"/>
</dbReference>
<dbReference type="Pfam" id="PF02787">
    <property type="entry name" value="CPSase_L_D3"/>
    <property type="match status" value="1"/>
</dbReference>
<dbReference type="Pfam" id="PF02142">
    <property type="entry name" value="MGS"/>
    <property type="match status" value="1"/>
</dbReference>
<dbReference type="PRINTS" id="PR00098">
    <property type="entry name" value="CPSASE"/>
</dbReference>
<dbReference type="SMART" id="SM01096">
    <property type="entry name" value="CPSase_L_D3"/>
    <property type="match status" value="1"/>
</dbReference>
<dbReference type="SMART" id="SM00851">
    <property type="entry name" value="MGS"/>
    <property type="match status" value="1"/>
</dbReference>
<dbReference type="SUPFAM" id="SSF48108">
    <property type="entry name" value="Carbamoyl phosphate synthetase, large subunit connection domain"/>
    <property type="match status" value="1"/>
</dbReference>
<dbReference type="SUPFAM" id="SSF56059">
    <property type="entry name" value="Glutathione synthetase ATP-binding domain-like"/>
    <property type="match status" value="2"/>
</dbReference>
<dbReference type="SUPFAM" id="SSF52335">
    <property type="entry name" value="Methylglyoxal synthase-like"/>
    <property type="match status" value="1"/>
</dbReference>
<dbReference type="SUPFAM" id="SSF52440">
    <property type="entry name" value="PreATP-grasp domain"/>
    <property type="match status" value="2"/>
</dbReference>
<dbReference type="PROSITE" id="PS50975">
    <property type="entry name" value="ATP_GRASP"/>
    <property type="match status" value="2"/>
</dbReference>
<dbReference type="PROSITE" id="PS00867">
    <property type="entry name" value="CPSASE_2"/>
    <property type="match status" value="2"/>
</dbReference>
<dbReference type="PROSITE" id="PS51855">
    <property type="entry name" value="MGS"/>
    <property type="match status" value="1"/>
</dbReference>
<reference key="1">
    <citation type="journal article" date="1999" name="Nature">
        <title>Genomic sequence comparison of two unrelated isolates of the human gastric pathogen Helicobacter pylori.</title>
        <authorList>
            <person name="Alm R.A."/>
            <person name="Ling L.-S.L."/>
            <person name="Moir D.T."/>
            <person name="King B.L."/>
            <person name="Brown E.D."/>
            <person name="Doig P.C."/>
            <person name="Smith D.R."/>
            <person name="Noonan B."/>
            <person name="Guild B.C."/>
            <person name="deJonge B.L."/>
            <person name="Carmel G."/>
            <person name="Tummino P.J."/>
            <person name="Caruso A."/>
            <person name="Uria-Nickelsen M."/>
            <person name="Mills D.M."/>
            <person name="Ives C."/>
            <person name="Gibson R."/>
            <person name="Merberg D."/>
            <person name="Mills S.D."/>
            <person name="Jiang Q."/>
            <person name="Taylor D.E."/>
            <person name="Vovis G.F."/>
            <person name="Trust T.J."/>
        </authorList>
    </citation>
    <scope>NUCLEOTIDE SEQUENCE [LARGE SCALE GENOMIC DNA]</scope>
    <source>
        <strain>J99 / ATCC 700824</strain>
    </source>
</reference>
<comment type="function">
    <text evidence="1">Large subunit of the glutamine-dependent carbamoyl phosphate synthetase (CPSase). CPSase catalyzes the formation of carbamoyl phosphate from the ammonia moiety of glutamine, carbonate, and phosphate donated by ATP, constituting the first step of 2 biosynthetic pathways, one leading to arginine and/or urea and the other to pyrimidine nucleotides. The large subunit (synthetase) binds the substrates ammonia (free or transferred from glutamine from the small subunit), hydrogencarbonate and ATP and carries out an ATP-coupled ligase reaction, activating hydrogencarbonate by forming carboxy phosphate which reacts with ammonia to form carbamoyl phosphate.</text>
</comment>
<comment type="catalytic activity">
    <reaction evidence="1">
        <text>hydrogencarbonate + L-glutamine + 2 ATP + H2O = carbamoyl phosphate + L-glutamate + 2 ADP + phosphate + 2 H(+)</text>
        <dbReference type="Rhea" id="RHEA:18633"/>
        <dbReference type="ChEBI" id="CHEBI:15377"/>
        <dbReference type="ChEBI" id="CHEBI:15378"/>
        <dbReference type="ChEBI" id="CHEBI:17544"/>
        <dbReference type="ChEBI" id="CHEBI:29985"/>
        <dbReference type="ChEBI" id="CHEBI:30616"/>
        <dbReference type="ChEBI" id="CHEBI:43474"/>
        <dbReference type="ChEBI" id="CHEBI:58228"/>
        <dbReference type="ChEBI" id="CHEBI:58359"/>
        <dbReference type="ChEBI" id="CHEBI:456216"/>
        <dbReference type="EC" id="6.3.5.5"/>
    </reaction>
</comment>
<comment type="catalytic activity">
    <molecule>Carbamoyl phosphate synthase large chain</molecule>
    <reaction evidence="1">
        <text>hydrogencarbonate + NH4(+) + 2 ATP = carbamoyl phosphate + 2 ADP + phosphate + 2 H(+)</text>
        <dbReference type="Rhea" id="RHEA:18029"/>
        <dbReference type="ChEBI" id="CHEBI:15378"/>
        <dbReference type="ChEBI" id="CHEBI:17544"/>
        <dbReference type="ChEBI" id="CHEBI:28938"/>
        <dbReference type="ChEBI" id="CHEBI:30616"/>
        <dbReference type="ChEBI" id="CHEBI:43474"/>
        <dbReference type="ChEBI" id="CHEBI:58228"/>
        <dbReference type="ChEBI" id="CHEBI:456216"/>
        <dbReference type="EC" id="6.3.4.16"/>
    </reaction>
</comment>
<comment type="cofactor">
    <cofactor evidence="1">
        <name>Mg(2+)</name>
        <dbReference type="ChEBI" id="CHEBI:18420"/>
    </cofactor>
    <cofactor evidence="1">
        <name>Mn(2+)</name>
        <dbReference type="ChEBI" id="CHEBI:29035"/>
    </cofactor>
    <text evidence="1">Binds 4 Mg(2+) or Mn(2+) ions per subunit.</text>
</comment>
<comment type="pathway">
    <text evidence="1">Amino-acid biosynthesis; L-arginine biosynthesis; carbamoyl phosphate from bicarbonate: step 1/1.</text>
</comment>
<comment type="pathway">
    <text evidence="1">Pyrimidine metabolism; UMP biosynthesis via de novo pathway; (S)-dihydroorotate from bicarbonate: step 1/3.</text>
</comment>
<comment type="subunit">
    <text evidence="1">Composed of two chains; the small (or glutamine) chain promotes the hydrolysis of glutamine to ammonia, which is used by the large (or ammonia) chain to synthesize carbamoyl phosphate. Tetramer of heterodimers (alpha,beta)4.</text>
</comment>
<comment type="domain">
    <text evidence="1">The large subunit is composed of 2 ATP-grasp domains that are involved in binding the 2 ATP molecules needed for carbamoyl phosphate synthesis. The N-terminal ATP-grasp domain (referred to as the carboxyphosphate synthetic component) catalyzes the ATP-dependent phosphorylation of hydrogencarbonate to carboxyphosphate and the subsequent nucleophilic attack by ammonia to form a carbamate intermediate. The C-terminal ATP-grasp domain (referred to as the carbamoyl phosphate synthetic component) then catalyzes the phosphorylation of carbamate with the second ATP to form the end product carbamoyl phosphate. The reactive and unstable enzyme intermediates are sequentially channeled from one active site to the next through the interior of the protein over a distance of at least 96 A.</text>
</comment>
<comment type="similarity">
    <text evidence="1">Belongs to the CarB family.</text>
</comment>
<name>CARB_HELPJ</name>
<keyword id="KW-0028">Amino-acid biosynthesis</keyword>
<keyword id="KW-0055">Arginine biosynthesis</keyword>
<keyword id="KW-0067">ATP-binding</keyword>
<keyword id="KW-0436">Ligase</keyword>
<keyword id="KW-0460">Magnesium</keyword>
<keyword id="KW-0464">Manganese</keyword>
<keyword id="KW-0479">Metal-binding</keyword>
<keyword id="KW-0547">Nucleotide-binding</keyword>
<keyword id="KW-0665">Pyrimidine biosynthesis</keyword>
<keyword id="KW-0677">Repeat</keyword>
<evidence type="ECO:0000255" key="1">
    <source>
        <dbReference type="HAMAP-Rule" id="MF_01210"/>
    </source>
</evidence>
<organism>
    <name type="scientific">Helicobacter pylori (strain J99 / ATCC 700824)</name>
    <name type="common">Campylobacter pylori J99</name>
    <dbReference type="NCBI Taxonomy" id="85963"/>
    <lineage>
        <taxon>Bacteria</taxon>
        <taxon>Pseudomonadati</taxon>
        <taxon>Campylobacterota</taxon>
        <taxon>Epsilonproteobacteria</taxon>
        <taxon>Campylobacterales</taxon>
        <taxon>Helicobacteraceae</taxon>
        <taxon>Helicobacter</taxon>
    </lineage>
</organism>
<gene>
    <name evidence="1" type="primary">carB</name>
    <name type="ordered locus">jhp_0853</name>
</gene>
<feature type="chain" id="PRO_0000145011" description="Carbamoyl phosphate synthase large chain">
    <location>
        <begin position="1"/>
        <end position="1085"/>
    </location>
</feature>
<feature type="domain" description="ATP-grasp 1" evidence="1">
    <location>
        <begin position="131"/>
        <end position="326"/>
    </location>
</feature>
<feature type="domain" description="ATP-grasp 2" evidence="1">
    <location>
        <begin position="678"/>
        <end position="871"/>
    </location>
</feature>
<feature type="domain" description="MGS-like" evidence="1">
    <location>
        <begin position="952"/>
        <end position="1085"/>
    </location>
</feature>
<feature type="region of interest" description="Carboxyphosphate synthetic domain" evidence="1">
    <location>
        <begin position="1"/>
        <end position="399"/>
    </location>
</feature>
<feature type="region of interest" description="Oligomerization domain" evidence="1">
    <location>
        <begin position="400"/>
        <end position="551"/>
    </location>
</feature>
<feature type="region of interest" description="Carbamoyl phosphate synthetic domain" evidence="1">
    <location>
        <begin position="552"/>
        <end position="951"/>
    </location>
</feature>
<feature type="region of interest" description="Allosteric domain" evidence="1">
    <location>
        <begin position="952"/>
        <end position="1085"/>
    </location>
</feature>
<feature type="binding site" evidence="1">
    <location>
        <position position="127"/>
    </location>
    <ligand>
        <name>ATP</name>
        <dbReference type="ChEBI" id="CHEBI:30616"/>
        <label>1</label>
    </ligand>
</feature>
<feature type="binding site" evidence="1">
    <location>
        <position position="167"/>
    </location>
    <ligand>
        <name>ATP</name>
        <dbReference type="ChEBI" id="CHEBI:30616"/>
        <label>1</label>
    </ligand>
</feature>
<feature type="binding site" evidence="1">
    <location>
        <position position="174"/>
    </location>
    <ligand>
        <name>ATP</name>
        <dbReference type="ChEBI" id="CHEBI:30616"/>
        <label>1</label>
    </ligand>
</feature>
<feature type="binding site" evidence="1">
    <location>
        <position position="206"/>
    </location>
    <ligand>
        <name>ATP</name>
        <dbReference type="ChEBI" id="CHEBI:30616"/>
        <label>1</label>
    </ligand>
</feature>
<feature type="binding site" evidence="1">
    <location>
        <position position="208"/>
    </location>
    <ligand>
        <name>ATP</name>
        <dbReference type="ChEBI" id="CHEBI:30616"/>
        <label>1</label>
    </ligand>
</feature>
<feature type="binding site" evidence="1">
    <location>
        <position position="213"/>
    </location>
    <ligand>
        <name>ATP</name>
        <dbReference type="ChEBI" id="CHEBI:30616"/>
        <label>1</label>
    </ligand>
</feature>
<feature type="binding site" evidence="1">
    <location>
        <position position="239"/>
    </location>
    <ligand>
        <name>ATP</name>
        <dbReference type="ChEBI" id="CHEBI:30616"/>
        <label>1</label>
    </ligand>
</feature>
<feature type="binding site" evidence="1">
    <location>
        <position position="240"/>
    </location>
    <ligand>
        <name>ATP</name>
        <dbReference type="ChEBI" id="CHEBI:30616"/>
        <label>1</label>
    </ligand>
</feature>
<feature type="binding site" evidence="1">
    <location>
        <position position="241"/>
    </location>
    <ligand>
        <name>ATP</name>
        <dbReference type="ChEBI" id="CHEBI:30616"/>
        <label>1</label>
    </ligand>
</feature>
<feature type="binding site" evidence="1">
    <location>
        <position position="283"/>
    </location>
    <ligand>
        <name>ATP</name>
        <dbReference type="ChEBI" id="CHEBI:30616"/>
        <label>1</label>
    </ligand>
</feature>
<feature type="binding site" evidence="1">
    <location>
        <position position="283"/>
    </location>
    <ligand>
        <name>Mg(2+)</name>
        <dbReference type="ChEBI" id="CHEBI:18420"/>
        <label>1</label>
    </ligand>
</feature>
<feature type="binding site" evidence="1">
    <location>
        <position position="283"/>
    </location>
    <ligand>
        <name>Mn(2+)</name>
        <dbReference type="ChEBI" id="CHEBI:29035"/>
        <label>1</label>
    </ligand>
</feature>
<feature type="binding site" evidence="1">
    <location>
        <position position="297"/>
    </location>
    <ligand>
        <name>ATP</name>
        <dbReference type="ChEBI" id="CHEBI:30616"/>
        <label>1</label>
    </ligand>
</feature>
<feature type="binding site" evidence="1">
    <location>
        <position position="297"/>
    </location>
    <ligand>
        <name>Mg(2+)</name>
        <dbReference type="ChEBI" id="CHEBI:18420"/>
        <label>1</label>
    </ligand>
</feature>
<feature type="binding site" evidence="1">
    <location>
        <position position="297"/>
    </location>
    <ligand>
        <name>Mg(2+)</name>
        <dbReference type="ChEBI" id="CHEBI:18420"/>
        <label>2</label>
    </ligand>
</feature>
<feature type="binding site" evidence="1">
    <location>
        <position position="297"/>
    </location>
    <ligand>
        <name>Mn(2+)</name>
        <dbReference type="ChEBI" id="CHEBI:29035"/>
        <label>1</label>
    </ligand>
</feature>
<feature type="binding site" evidence="1">
    <location>
        <position position="297"/>
    </location>
    <ligand>
        <name>Mn(2+)</name>
        <dbReference type="ChEBI" id="CHEBI:29035"/>
        <label>2</label>
    </ligand>
</feature>
<feature type="binding site" evidence="1">
    <location>
        <position position="299"/>
    </location>
    <ligand>
        <name>Mg(2+)</name>
        <dbReference type="ChEBI" id="CHEBI:18420"/>
        <label>2</label>
    </ligand>
</feature>
<feature type="binding site" evidence="1">
    <location>
        <position position="299"/>
    </location>
    <ligand>
        <name>Mn(2+)</name>
        <dbReference type="ChEBI" id="CHEBI:29035"/>
        <label>2</label>
    </ligand>
</feature>
<feature type="binding site" evidence="1">
    <location>
        <position position="714"/>
    </location>
    <ligand>
        <name>ATP</name>
        <dbReference type="ChEBI" id="CHEBI:30616"/>
        <label>2</label>
    </ligand>
</feature>
<feature type="binding site" evidence="1">
    <location>
        <position position="756"/>
    </location>
    <ligand>
        <name>ATP</name>
        <dbReference type="ChEBI" id="CHEBI:30616"/>
        <label>2</label>
    </ligand>
</feature>
<feature type="binding site" evidence="1">
    <location>
        <position position="758"/>
    </location>
    <ligand>
        <name>ATP</name>
        <dbReference type="ChEBI" id="CHEBI:30616"/>
        <label>2</label>
    </ligand>
</feature>
<feature type="binding site" evidence="1">
    <location>
        <position position="763"/>
    </location>
    <ligand>
        <name>ATP</name>
        <dbReference type="ChEBI" id="CHEBI:30616"/>
        <label>2</label>
    </ligand>
</feature>
<feature type="binding site" evidence="1">
    <location>
        <position position="788"/>
    </location>
    <ligand>
        <name>ATP</name>
        <dbReference type="ChEBI" id="CHEBI:30616"/>
        <label>2</label>
    </ligand>
</feature>
<feature type="binding site" evidence="1">
    <location>
        <position position="789"/>
    </location>
    <ligand>
        <name>ATP</name>
        <dbReference type="ChEBI" id="CHEBI:30616"/>
        <label>2</label>
    </ligand>
</feature>
<feature type="binding site" evidence="1">
    <location>
        <position position="790"/>
    </location>
    <ligand>
        <name>ATP</name>
        <dbReference type="ChEBI" id="CHEBI:30616"/>
        <label>2</label>
    </ligand>
</feature>
<feature type="binding site" evidence="1">
    <location>
        <position position="791"/>
    </location>
    <ligand>
        <name>ATP</name>
        <dbReference type="ChEBI" id="CHEBI:30616"/>
        <label>2</label>
    </ligand>
</feature>
<feature type="binding site" evidence="1">
    <location>
        <position position="830"/>
    </location>
    <ligand>
        <name>ATP</name>
        <dbReference type="ChEBI" id="CHEBI:30616"/>
        <label>2</label>
    </ligand>
</feature>
<feature type="binding site" evidence="1">
    <location>
        <position position="830"/>
    </location>
    <ligand>
        <name>Mg(2+)</name>
        <dbReference type="ChEBI" id="CHEBI:18420"/>
        <label>3</label>
    </ligand>
</feature>
<feature type="binding site" evidence="1">
    <location>
        <position position="830"/>
    </location>
    <ligand>
        <name>Mn(2+)</name>
        <dbReference type="ChEBI" id="CHEBI:29035"/>
        <label>3</label>
    </ligand>
</feature>
<feature type="binding site" evidence="1">
    <location>
        <position position="842"/>
    </location>
    <ligand>
        <name>ATP</name>
        <dbReference type="ChEBI" id="CHEBI:30616"/>
        <label>2</label>
    </ligand>
</feature>
<feature type="binding site" evidence="1">
    <location>
        <position position="842"/>
    </location>
    <ligand>
        <name>Mg(2+)</name>
        <dbReference type="ChEBI" id="CHEBI:18420"/>
        <label>3</label>
    </ligand>
</feature>
<feature type="binding site" evidence="1">
    <location>
        <position position="842"/>
    </location>
    <ligand>
        <name>Mg(2+)</name>
        <dbReference type="ChEBI" id="CHEBI:18420"/>
        <label>4</label>
    </ligand>
</feature>
<feature type="binding site" evidence="1">
    <location>
        <position position="842"/>
    </location>
    <ligand>
        <name>Mn(2+)</name>
        <dbReference type="ChEBI" id="CHEBI:29035"/>
        <label>3</label>
    </ligand>
</feature>
<feature type="binding site" evidence="1">
    <location>
        <position position="842"/>
    </location>
    <ligand>
        <name>Mn(2+)</name>
        <dbReference type="ChEBI" id="CHEBI:29035"/>
        <label>4</label>
    </ligand>
</feature>
<feature type="binding site" evidence="1">
    <location>
        <position position="844"/>
    </location>
    <ligand>
        <name>Mg(2+)</name>
        <dbReference type="ChEBI" id="CHEBI:18420"/>
        <label>4</label>
    </ligand>
</feature>
<feature type="binding site" evidence="1">
    <location>
        <position position="844"/>
    </location>
    <ligand>
        <name>Mn(2+)</name>
        <dbReference type="ChEBI" id="CHEBI:29035"/>
        <label>4</label>
    </ligand>
</feature>
<protein>
    <recommendedName>
        <fullName evidence="1">Carbamoyl phosphate synthase large chain</fullName>
        <ecNumber evidence="1">6.3.4.16</ecNumber>
        <ecNumber evidence="1">6.3.5.5</ecNumber>
    </recommendedName>
    <alternativeName>
        <fullName evidence="1">Carbamoyl phosphate synthetase ammonia chain</fullName>
    </alternativeName>
</protein>